<evidence type="ECO:0000255" key="1">
    <source>
        <dbReference type="HAMAP-Rule" id="MF_00505"/>
    </source>
</evidence>
<dbReference type="EMBL" id="CP000681">
    <property type="protein sequence ID" value="ABP76020.1"/>
    <property type="molecule type" value="Genomic_DNA"/>
</dbReference>
<dbReference type="SMR" id="A4Y7T7"/>
<dbReference type="STRING" id="319224.Sputcn32_2299"/>
<dbReference type="KEGG" id="spc:Sputcn32_2299"/>
<dbReference type="eggNOG" id="COG0326">
    <property type="taxonomic scope" value="Bacteria"/>
</dbReference>
<dbReference type="HOGENOM" id="CLU_006684_3_0_6"/>
<dbReference type="GO" id="GO:0005737">
    <property type="term" value="C:cytoplasm"/>
    <property type="evidence" value="ECO:0007669"/>
    <property type="project" value="UniProtKB-SubCell"/>
</dbReference>
<dbReference type="GO" id="GO:0005524">
    <property type="term" value="F:ATP binding"/>
    <property type="evidence" value="ECO:0007669"/>
    <property type="project" value="UniProtKB-UniRule"/>
</dbReference>
<dbReference type="GO" id="GO:0016887">
    <property type="term" value="F:ATP hydrolysis activity"/>
    <property type="evidence" value="ECO:0007669"/>
    <property type="project" value="InterPro"/>
</dbReference>
<dbReference type="GO" id="GO:0140662">
    <property type="term" value="F:ATP-dependent protein folding chaperone"/>
    <property type="evidence" value="ECO:0007669"/>
    <property type="project" value="InterPro"/>
</dbReference>
<dbReference type="GO" id="GO:0051082">
    <property type="term" value="F:unfolded protein binding"/>
    <property type="evidence" value="ECO:0007669"/>
    <property type="project" value="UniProtKB-UniRule"/>
</dbReference>
<dbReference type="CDD" id="cd16927">
    <property type="entry name" value="HATPase_Hsp90-like"/>
    <property type="match status" value="1"/>
</dbReference>
<dbReference type="FunFam" id="3.30.230.80:FF:000002">
    <property type="entry name" value="Molecular chaperone HtpG"/>
    <property type="match status" value="1"/>
</dbReference>
<dbReference type="FunFam" id="3.30.565.10:FF:000009">
    <property type="entry name" value="Molecular chaperone HtpG"/>
    <property type="match status" value="1"/>
</dbReference>
<dbReference type="Gene3D" id="3.30.230.80">
    <property type="match status" value="1"/>
</dbReference>
<dbReference type="Gene3D" id="3.40.50.11260">
    <property type="match status" value="1"/>
</dbReference>
<dbReference type="Gene3D" id="1.20.120.790">
    <property type="entry name" value="Heat shock protein 90, C-terminal domain"/>
    <property type="match status" value="1"/>
</dbReference>
<dbReference type="Gene3D" id="3.30.565.10">
    <property type="entry name" value="Histidine kinase-like ATPase, C-terminal domain"/>
    <property type="match status" value="1"/>
</dbReference>
<dbReference type="HAMAP" id="MF_00505">
    <property type="entry name" value="HSP90"/>
    <property type="match status" value="1"/>
</dbReference>
<dbReference type="InterPro" id="IPR036890">
    <property type="entry name" value="HATPase_C_sf"/>
</dbReference>
<dbReference type="InterPro" id="IPR019805">
    <property type="entry name" value="Heat_shock_protein_90_CS"/>
</dbReference>
<dbReference type="InterPro" id="IPR037196">
    <property type="entry name" value="HSP90_C"/>
</dbReference>
<dbReference type="InterPro" id="IPR001404">
    <property type="entry name" value="Hsp90_fam"/>
</dbReference>
<dbReference type="InterPro" id="IPR020575">
    <property type="entry name" value="Hsp90_N"/>
</dbReference>
<dbReference type="InterPro" id="IPR020568">
    <property type="entry name" value="Ribosomal_Su5_D2-typ_SF"/>
</dbReference>
<dbReference type="NCBIfam" id="NF003555">
    <property type="entry name" value="PRK05218.1"/>
    <property type="match status" value="1"/>
</dbReference>
<dbReference type="PANTHER" id="PTHR11528">
    <property type="entry name" value="HEAT SHOCK PROTEIN 90 FAMILY MEMBER"/>
    <property type="match status" value="1"/>
</dbReference>
<dbReference type="Pfam" id="PF13589">
    <property type="entry name" value="HATPase_c_3"/>
    <property type="match status" value="1"/>
</dbReference>
<dbReference type="Pfam" id="PF00183">
    <property type="entry name" value="HSP90"/>
    <property type="match status" value="1"/>
</dbReference>
<dbReference type="PIRSF" id="PIRSF002583">
    <property type="entry name" value="Hsp90"/>
    <property type="match status" value="1"/>
</dbReference>
<dbReference type="PRINTS" id="PR00775">
    <property type="entry name" value="HEATSHOCK90"/>
</dbReference>
<dbReference type="SMART" id="SM00387">
    <property type="entry name" value="HATPase_c"/>
    <property type="match status" value="1"/>
</dbReference>
<dbReference type="SUPFAM" id="SSF55874">
    <property type="entry name" value="ATPase domain of HSP90 chaperone/DNA topoisomerase II/histidine kinase"/>
    <property type="match status" value="1"/>
</dbReference>
<dbReference type="SUPFAM" id="SSF110942">
    <property type="entry name" value="HSP90 C-terminal domain"/>
    <property type="match status" value="1"/>
</dbReference>
<dbReference type="SUPFAM" id="SSF54211">
    <property type="entry name" value="Ribosomal protein S5 domain 2-like"/>
    <property type="match status" value="1"/>
</dbReference>
<dbReference type="PROSITE" id="PS00298">
    <property type="entry name" value="HSP90"/>
    <property type="match status" value="1"/>
</dbReference>
<sequence>MSQQETHGFQTEVKQLLHLMIHSLYSNKEIFLRELVSNAADAADKLRYLALTNDALYEGDGELRVRISADKDKGTVTIEDNGVGMTRDGVIEHLGTIAKSGTAEFFKNLSGEASKDSQLIGQFGVGFYSAFIVAKKVTVRTRAAGHKADEAVLWESEGEGSFTVETITKASRGTEITLHLRDEEKEFADDWRLRSIITKYSDHISVPVEMWQEGTPERDGPDGEKIPATEGYWKVMNKATALWMRNKSEISDEEYQEFYKHISHDYTDALLWSHNRVEGKQEYTNLLYIPSKAPWDLWNRDRKHGLKLFVQRVFIMDDAEQFMPSYLRFVQGLIDSNDLPLNVSREILQDNHITKAMRTGITKRVLGMLEKLAKDDAEKYQQFWAEFGQVLKEGPAEDFANRERIAGLLRFASTHTGSAAPTVSLDDYISRMKEGQTKIYYIVADSYDAAANSPHLELLRKKGIEVLLMSERIDEWLINHLTEYKEKQLHSVTRGELELGELEDAAEKEAQEKLAEESAPLIERIKAALGTKVADVKVTSRLTDTPACVVTGEGEMSTQMIKLMQAAGQPVPEVKPTFEVNPAHPLVSRLNDLQDETAFADWSNLLLQQAQLSEKGSLADPSAFIKLMNQMLLANMK</sequence>
<comment type="function">
    <text evidence="1">Molecular chaperone. Has ATPase activity.</text>
</comment>
<comment type="subunit">
    <text evidence="1">Homodimer.</text>
</comment>
<comment type="subcellular location">
    <subcellularLocation>
        <location evidence="1">Cytoplasm</location>
    </subcellularLocation>
</comment>
<comment type="similarity">
    <text evidence="1">Belongs to the heat shock protein 90 family.</text>
</comment>
<accession>A4Y7T7</accession>
<proteinExistence type="inferred from homology"/>
<name>HTPG_SHEPC</name>
<organism>
    <name type="scientific">Shewanella putrefaciens (strain CN-32 / ATCC BAA-453)</name>
    <dbReference type="NCBI Taxonomy" id="319224"/>
    <lineage>
        <taxon>Bacteria</taxon>
        <taxon>Pseudomonadati</taxon>
        <taxon>Pseudomonadota</taxon>
        <taxon>Gammaproteobacteria</taxon>
        <taxon>Alteromonadales</taxon>
        <taxon>Shewanellaceae</taxon>
        <taxon>Shewanella</taxon>
    </lineage>
</organism>
<keyword id="KW-0067">ATP-binding</keyword>
<keyword id="KW-0143">Chaperone</keyword>
<keyword id="KW-0963">Cytoplasm</keyword>
<keyword id="KW-0547">Nucleotide-binding</keyword>
<keyword id="KW-0346">Stress response</keyword>
<reference key="1">
    <citation type="submission" date="2007-04" db="EMBL/GenBank/DDBJ databases">
        <title>Complete sequence of Shewanella putrefaciens CN-32.</title>
        <authorList>
            <consortium name="US DOE Joint Genome Institute"/>
            <person name="Copeland A."/>
            <person name="Lucas S."/>
            <person name="Lapidus A."/>
            <person name="Barry K."/>
            <person name="Detter J.C."/>
            <person name="Glavina del Rio T."/>
            <person name="Hammon N."/>
            <person name="Israni S."/>
            <person name="Dalin E."/>
            <person name="Tice H."/>
            <person name="Pitluck S."/>
            <person name="Chain P."/>
            <person name="Malfatti S."/>
            <person name="Shin M."/>
            <person name="Vergez L."/>
            <person name="Schmutz J."/>
            <person name="Larimer F."/>
            <person name="Land M."/>
            <person name="Hauser L."/>
            <person name="Kyrpides N."/>
            <person name="Mikhailova N."/>
            <person name="Romine M.F."/>
            <person name="Fredrickson J."/>
            <person name="Tiedje J."/>
            <person name="Richardson P."/>
        </authorList>
    </citation>
    <scope>NUCLEOTIDE SEQUENCE [LARGE SCALE GENOMIC DNA]</scope>
    <source>
        <strain>CN-32 / ATCC BAA-453</strain>
    </source>
</reference>
<feature type="chain" id="PRO_1000014956" description="Chaperone protein HtpG">
    <location>
        <begin position="1"/>
        <end position="637"/>
    </location>
</feature>
<feature type="region of interest" description="A; substrate-binding" evidence="1">
    <location>
        <begin position="1"/>
        <end position="345"/>
    </location>
</feature>
<feature type="region of interest" description="B" evidence="1">
    <location>
        <begin position="346"/>
        <end position="562"/>
    </location>
</feature>
<feature type="region of interest" description="C" evidence="1">
    <location>
        <begin position="563"/>
        <end position="637"/>
    </location>
</feature>
<protein>
    <recommendedName>
        <fullName evidence="1">Chaperone protein HtpG</fullName>
    </recommendedName>
    <alternativeName>
        <fullName evidence="1">Heat shock protein HtpG</fullName>
    </alternativeName>
    <alternativeName>
        <fullName evidence="1">High temperature protein G</fullName>
    </alternativeName>
</protein>
<gene>
    <name evidence="1" type="primary">htpG</name>
    <name type="ordered locus">Sputcn32_2299</name>
</gene>